<name>END4_EXIS2</name>
<comment type="function">
    <text evidence="1">Endonuclease IV plays a role in DNA repair. It cleaves phosphodiester bonds at apurinic or apyrimidinic (AP) sites, generating a 3'-hydroxyl group and a 5'-terminal sugar phosphate.</text>
</comment>
<comment type="catalytic activity">
    <reaction evidence="1">
        <text>Endonucleolytic cleavage to 5'-phosphooligonucleotide end-products.</text>
        <dbReference type="EC" id="3.1.21.2"/>
    </reaction>
</comment>
<comment type="cofactor">
    <cofactor evidence="1">
        <name>Zn(2+)</name>
        <dbReference type="ChEBI" id="CHEBI:29105"/>
    </cofactor>
    <text evidence="1">Binds 3 Zn(2+) ions.</text>
</comment>
<comment type="similarity">
    <text evidence="1">Belongs to the AP endonuclease 2 family.</text>
</comment>
<keyword id="KW-0227">DNA damage</keyword>
<keyword id="KW-0234">DNA repair</keyword>
<keyword id="KW-0255">Endonuclease</keyword>
<keyword id="KW-0378">Hydrolase</keyword>
<keyword id="KW-0479">Metal-binding</keyword>
<keyword id="KW-0540">Nuclease</keyword>
<keyword id="KW-1185">Reference proteome</keyword>
<keyword id="KW-0862">Zinc</keyword>
<accession>B1YL88</accession>
<feature type="chain" id="PRO_1000096883" description="Probable endonuclease 4">
    <location>
        <begin position="1"/>
        <end position="299"/>
    </location>
</feature>
<feature type="binding site" evidence="1">
    <location>
        <position position="68"/>
    </location>
    <ligand>
        <name>Zn(2+)</name>
        <dbReference type="ChEBI" id="CHEBI:29105"/>
        <label>1</label>
    </ligand>
</feature>
<feature type="binding site" evidence="1">
    <location>
        <position position="110"/>
    </location>
    <ligand>
        <name>Zn(2+)</name>
        <dbReference type="ChEBI" id="CHEBI:29105"/>
        <label>1</label>
    </ligand>
</feature>
<feature type="binding site" evidence="1">
    <location>
        <position position="145"/>
    </location>
    <ligand>
        <name>Zn(2+)</name>
        <dbReference type="ChEBI" id="CHEBI:29105"/>
        <label>1</label>
    </ligand>
</feature>
<feature type="binding site" evidence="1">
    <location>
        <position position="145"/>
    </location>
    <ligand>
        <name>Zn(2+)</name>
        <dbReference type="ChEBI" id="CHEBI:29105"/>
        <label>2</label>
    </ligand>
</feature>
<feature type="binding site" evidence="1">
    <location>
        <position position="179"/>
    </location>
    <ligand>
        <name>Zn(2+)</name>
        <dbReference type="ChEBI" id="CHEBI:29105"/>
        <label>2</label>
    </ligand>
</feature>
<feature type="binding site" evidence="1">
    <location>
        <position position="182"/>
    </location>
    <ligand>
        <name>Zn(2+)</name>
        <dbReference type="ChEBI" id="CHEBI:29105"/>
        <label>3</label>
    </ligand>
</feature>
<feature type="binding site" evidence="1">
    <location>
        <position position="214"/>
    </location>
    <ligand>
        <name>Zn(2+)</name>
        <dbReference type="ChEBI" id="CHEBI:29105"/>
        <label>2</label>
    </ligand>
</feature>
<feature type="binding site" evidence="1">
    <location>
        <position position="227"/>
    </location>
    <ligand>
        <name>Zn(2+)</name>
        <dbReference type="ChEBI" id="CHEBI:29105"/>
        <label>3</label>
    </ligand>
</feature>
<feature type="binding site" evidence="1">
    <location>
        <position position="229"/>
    </location>
    <ligand>
        <name>Zn(2+)</name>
        <dbReference type="ChEBI" id="CHEBI:29105"/>
        <label>3</label>
    </ligand>
</feature>
<feature type="binding site" evidence="1">
    <location>
        <position position="259"/>
    </location>
    <ligand>
        <name>Zn(2+)</name>
        <dbReference type="ChEBI" id="CHEBI:29105"/>
        <label>2</label>
    </ligand>
</feature>
<dbReference type="EC" id="3.1.21.2" evidence="1"/>
<dbReference type="EMBL" id="CP001022">
    <property type="protein sequence ID" value="ACB60320.1"/>
    <property type="molecule type" value="Genomic_DNA"/>
</dbReference>
<dbReference type="RefSeq" id="WP_012369744.1">
    <property type="nucleotide sequence ID" value="NC_010556.1"/>
</dbReference>
<dbReference type="SMR" id="B1YL88"/>
<dbReference type="STRING" id="262543.Exig_0840"/>
<dbReference type="KEGG" id="esi:Exig_0840"/>
<dbReference type="eggNOG" id="COG0648">
    <property type="taxonomic scope" value="Bacteria"/>
</dbReference>
<dbReference type="HOGENOM" id="CLU_025885_4_1_9"/>
<dbReference type="OrthoDB" id="9805666at2"/>
<dbReference type="Proteomes" id="UP000001681">
    <property type="component" value="Chromosome"/>
</dbReference>
<dbReference type="GO" id="GO:0008833">
    <property type="term" value="F:deoxyribonuclease IV (phage-T4-induced) activity"/>
    <property type="evidence" value="ECO:0007669"/>
    <property type="project" value="UniProtKB-UniRule"/>
</dbReference>
<dbReference type="GO" id="GO:0003677">
    <property type="term" value="F:DNA binding"/>
    <property type="evidence" value="ECO:0007669"/>
    <property type="project" value="InterPro"/>
</dbReference>
<dbReference type="GO" id="GO:0003906">
    <property type="term" value="F:DNA-(apurinic or apyrimidinic site) endonuclease activity"/>
    <property type="evidence" value="ECO:0007669"/>
    <property type="project" value="TreeGrafter"/>
</dbReference>
<dbReference type="GO" id="GO:0008081">
    <property type="term" value="F:phosphoric diester hydrolase activity"/>
    <property type="evidence" value="ECO:0007669"/>
    <property type="project" value="TreeGrafter"/>
</dbReference>
<dbReference type="GO" id="GO:0008270">
    <property type="term" value="F:zinc ion binding"/>
    <property type="evidence" value="ECO:0007669"/>
    <property type="project" value="UniProtKB-UniRule"/>
</dbReference>
<dbReference type="GO" id="GO:0006284">
    <property type="term" value="P:base-excision repair"/>
    <property type="evidence" value="ECO:0007669"/>
    <property type="project" value="TreeGrafter"/>
</dbReference>
<dbReference type="CDD" id="cd00019">
    <property type="entry name" value="AP2Ec"/>
    <property type="match status" value="1"/>
</dbReference>
<dbReference type="FunFam" id="3.20.20.150:FF:000001">
    <property type="entry name" value="Probable endonuclease 4"/>
    <property type="match status" value="1"/>
</dbReference>
<dbReference type="Gene3D" id="3.20.20.150">
    <property type="entry name" value="Divalent-metal-dependent TIM barrel enzymes"/>
    <property type="match status" value="1"/>
</dbReference>
<dbReference type="HAMAP" id="MF_00152">
    <property type="entry name" value="Nfo"/>
    <property type="match status" value="1"/>
</dbReference>
<dbReference type="InterPro" id="IPR001719">
    <property type="entry name" value="AP_endonuc_2"/>
</dbReference>
<dbReference type="InterPro" id="IPR018246">
    <property type="entry name" value="AP_endonuc_F2_Zn_BS"/>
</dbReference>
<dbReference type="InterPro" id="IPR036237">
    <property type="entry name" value="Xyl_isomerase-like_sf"/>
</dbReference>
<dbReference type="InterPro" id="IPR013022">
    <property type="entry name" value="Xyl_isomerase-like_TIM-brl"/>
</dbReference>
<dbReference type="NCBIfam" id="TIGR00587">
    <property type="entry name" value="nfo"/>
    <property type="match status" value="1"/>
</dbReference>
<dbReference type="NCBIfam" id="NF002196">
    <property type="entry name" value="PRK01060.1-1"/>
    <property type="match status" value="1"/>
</dbReference>
<dbReference type="PANTHER" id="PTHR21445:SF0">
    <property type="entry name" value="APURINIC-APYRIMIDINIC ENDONUCLEASE"/>
    <property type="match status" value="1"/>
</dbReference>
<dbReference type="PANTHER" id="PTHR21445">
    <property type="entry name" value="ENDONUCLEASE IV ENDODEOXYRIBONUCLEASE IV"/>
    <property type="match status" value="1"/>
</dbReference>
<dbReference type="Pfam" id="PF01261">
    <property type="entry name" value="AP_endonuc_2"/>
    <property type="match status" value="1"/>
</dbReference>
<dbReference type="SMART" id="SM00518">
    <property type="entry name" value="AP2Ec"/>
    <property type="match status" value="1"/>
</dbReference>
<dbReference type="SUPFAM" id="SSF51658">
    <property type="entry name" value="Xylose isomerase-like"/>
    <property type="match status" value="1"/>
</dbReference>
<dbReference type="PROSITE" id="PS00729">
    <property type="entry name" value="AP_NUCLEASE_F2_1"/>
    <property type="match status" value="1"/>
</dbReference>
<dbReference type="PROSITE" id="PS00730">
    <property type="entry name" value="AP_NUCLEASE_F2_2"/>
    <property type="match status" value="1"/>
</dbReference>
<dbReference type="PROSITE" id="PS00731">
    <property type="entry name" value="AP_NUCLEASE_F2_3"/>
    <property type="match status" value="1"/>
</dbReference>
<dbReference type="PROSITE" id="PS51432">
    <property type="entry name" value="AP_NUCLEASE_F2_4"/>
    <property type="match status" value="1"/>
</dbReference>
<gene>
    <name evidence="1" type="primary">nfo</name>
    <name type="ordered locus">Exig_0840</name>
</gene>
<sequence>MKIGSHVSLSGKKMLLGASEEAASYGATTMMVYTGAPQNTRRKPISDLRIPEALLHMEENGIEEIVVHAPYIINLGNTTKPETFELAVSFLGEEIRRAEALEKAKHIVLHPGAHVGAGEEVGIKRIIEGLNEVLTGDEKVKIALETMAGKGSEIGKTFEEIAAIIAGVTHNDRLSVCLDTCHVHDAGYDLIHDLDGVLESFDRIVGINRLGVIHVNDSKNIRGAKKDRHENIGFGEIGFDPLHRIVHHRDLAHLPKILETPYIGLDPRKKVAPYREEIAMLRSGNFDAEWRLPLIGTSI</sequence>
<organism>
    <name type="scientific">Exiguobacterium sibiricum (strain DSM 17290 / CCUG 55495 / CIP 109462 / JCM 13490 / 255-15)</name>
    <dbReference type="NCBI Taxonomy" id="262543"/>
    <lineage>
        <taxon>Bacteria</taxon>
        <taxon>Bacillati</taxon>
        <taxon>Bacillota</taxon>
        <taxon>Bacilli</taxon>
        <taxon>Bacillales</taxon>
        <taxon>Bacillales Family XII. Incertae Sedis</taxon>
        <taxon>Exiguobacterium</taxon>
    </lineage>
</organism>
<protein>
    <recommendedName>
        <fullName evidence="1">Probable endonuclease 4</fullName>
        <ecNumber evidence="1">3.1.21.2</ecNumber>
    </recommendedName>
    <alternativeName>
        <fullName evidence="1">Endodeoxyribonuclease IV</fullName>
    </alternativeName>
    <alternativeName>
        <fullName evidence="1">Endonuclease IV</fullName>
    </alternativeName>
</protein>
<evidence type="ECO:0000255" key="1">
    <source>
        <dbReference type="HAMAP-Rule" id="MF_00152"/>
    </source>
</evidence>
<proteinExistence type="inferred from homology"/>
<reference key="1">
    <citation type="submission" date="2008-04" db="EMBL/GenBank/DDBJ databases">
        <title>Complete sequence of chromosome of Exiguobacterium sibiricum 255-15.</title>
        <authorList>
            <consortium name="US DOE Joint Genome Institute"/>
            <person name="Copeland A."/>
            <person name="Lucas S."/>
            <person name="Lapidus A."/>
            <person name="Glavina del Rio T."/>
            <person name="Dalin E."/>
            <person name="Tice H."/>
            <person name="Bruce D."/>
            <person name="Goodwin L."/>
            <person name="Pitluck S."/>
            <person name="Kiss H."/>
            <person name="Chertkov O."/>
            <person name="Monk C."/>
            <person name="Brettin T."/>
            <person name="Detter J.C."/>
            <person name="Han C."/>
            <person name="Kuske C.R."/>
            <person name="Schmutz J."/>
            <person name="Larimer F."/>
            <person name="Land M."/>
            <person name="Hauser L."/>
            <person name="Kyrpides N."/>
            <person name="Mikhailova N."/>
            <person name="Vishnivetskaya T."/>
            <person name="Rodrigues D.F."/>
            <person name="Gilichinsky D."/>
            <person name="Tiedje J."/>
            <person name="Richardson P."/>
        </authorList>
    </citation>
    <scope>NUCLEOTIDE SEQUENCE [LARGE SCALE GENOMIC DNA]</scope>
    <source>
        <strain>DSM 17290 / CCUG 55495 / CIP 109462 / JCM 13490 / 255-15</strain>
    </source>
</reference>